<organism>
    <name type="scientific">Streptococcus agalactiae serotype V (strain ATCC BAA-611 / 2603 V/R)</name>
    <dbReference type="NCBI Taxonomy" id="208435"/>
    <lineage>
        <taxon>Bacteria</taxon>
        <taxon>Bacillati</taxon>
        <taxon>Bacillota</taxon>
        <taxon>Bacilli</taxon>
        <taxon>Lactobacillales</taxon>
        <taxon>Streptococcaceae</taxon>
        <taxon>Streptococcus</taxon>
    </lineage>
</organism>
<accession>Q8E0G1</accession>
<comment type="function">
    <text evidence="1">Increases the formation of ribosomal termination complexes and stimulates activities of RF-1 and RF-2. It binds guanine nucleotides and has strong preference for UGA stop codons. It may interact directly with the ribosome. The stimulation of RF-1 and RF-2 is significantly reduced by GTP and GDP, but not by GMP.</text>
</comment>
<comment type="subcellular location">
    <subcellularLocation>
        <location evidence="1">Cytoplasm</location>
    </subcellularLocation>
</comment>
<comment type="similarity">
    <text evidence="1">Belongs to the TRAFAC class translation factor GTPase superfamily. Classic translation factor GTPase family. PrfC subfamily.</text>
</comment>
<name>RF3_STRA5</name>
<feature type="chain" id="PRO_0000210970" description="Peptide chain release factor 3">
    <location>
        <begin position="1"/>
        <end position="514"/>
    </location>
</feature>
<feature type="domain" description="tr-type G">
    <location>
        <begin position="8"/>
        <end position="268"/>
    </location>
</feature>
<feature type="binding site" evidence="1">
    <location>
        <begin position="17"/>
        <end position="24"/>
    </location>
    <ligand>
        <name>GTP</name>
        <dbReference type="ChEBI" id="CHEBI:37565"/>
    </ligand>
</feature>
<feature type="binding site" evidence="1">
    <location>
        <begin position="85"/>
        <end position="89"/>
    </location>
    <ligand>
        <name>GTP</name>
        <dbReference type="ChEBI" id="CHEBI:37565"/>
    </ligand>
</feature>
<feature type="binding site" evidence="1">
    <location>
        <begin position="139"/>
        <end position="142"/>
    </location>
    <ligand>
        <name>GTP</name>
        <dbReference type="ChEBI" id="CHEBI:37565"/>
    </ligand>
</feature>
<evidence type="ECO:0000255" key="1">
    <source>
        <dbReference type="HAMAP-Rule" id="MF_00072"/>
    </source>
</evidence>
<gene>
    <name evidence="1" type="primary">prfC</name>
    <name type="ordered locus">SAG0772</name>
</gene>
<reference key="1">
    <citation type="journal article" date="2002" name="Proc. Natl. Acad. Sci. U.S.A.">
        <title>Complete genome sequence and comparative genomic analysis of an emerging human pathogen, serotype V Streptococcus agalactiae.</title>
        <authorList>
            <person name="Tettelin H."/>
            <person name="Masignani V."/>
            <person name="Cieslewicz M.J."/>
            <person name="Eisen J.A."/>
            <person name="Peterson S.N."/>
            <person name="Wessels M.R."/>
            <person name="Paulsen I.T."/>
            <person name="Nelson K.E."/>
            <person name="Margarit I."/>
            <person name="Read T.D."/>
            <person name="Madoff L.C."/>
            <person name="Wolf A.M."/>
            <person name="Beanan M.J."/>
            <person name="Brinkac L.M."/>
            <person name="Daugherty S.C."/>
            <person name="DeBoy R.T."/>
            <person name="Durkin A.S."/>
            <person name="Kolonay J.F."/>
            <person name="Madupu R."/>
            <person name="Lewis M.R."/>
            <person name="Radune D."/>
            <person name="Fedorova N.B."/>
            <person name="Scanlan D."/>
            <person name="Khouri H.M."/>
            <person name="Mulligan S."/>
            <person name="Carty H.A."/>
            <person name="Cline R.T."/>
            <person name="Van Aken S.E."/>
            <person name="Gill J."/>
            <person name="Scarselli M."/>
            <person name="Mora M."/>
            <person name="Iacobini E.T."/>
            <person name="Brettoni C."/>
            <person name="Galli G."/>
            <person name="Mariani M."/>
            <person name="Vegni F."/>
            <person name="Maione D."/>
            <person name="Rinaudo D."/>
            <person name="Rappuoli R."/>
            <person name="Telford J.L."/>
            <person name="Kasper D.L."/>
            <person name="Grandi G."/>
            <person name="Fraser C.M."/>
        </authorList>
    </citation>
    <scope>NUCLEOTIDE SEQUENCE [LARGE SCALE GENOMIC DNA]</scope>
    <source>
        <strain>ATCC BAA-611 / 2603 V/R</strain>
    </source>
</reference>
<dbReference type="EMBL" id="AE009948">
    <property type="protein sequence ID" value="AAM99659.1"/>
    <property type="molecule type" value="Genomic_DNA"/>
</dbReference>
<dbReference type="RefSeq" id="NP_687787.1">
    <property type="nucleotide sequence ID" value="NC_004116.1"/>
</dbReference>
<dbReference type="RefSeq" id="WP_000174832.1">
    <property type="nucleotide sequence ID" value="NC_004116.1"/>
</dbReference>
<dbReference type="SMR" id="Q8E0G1"/>
<dbReference type="STRING" id="208435.SAG0772"/>
<dbReference type="KEGG" id="sag:SAG0772"/>
<dbReference type="PATRIC" id="fig|208435.3.peg.779"/>
<dbReference type="HOGENOM" id="CLU_002794_2_1_9"/>
<dbReference type="OrthoDB" id="9804431at2"/>
<dbReference type="Proteomes" id="UP000000821">
    <property type="component" value="Chromosome"/>
</dbReference>
<dbReference type="GO" id="GO:0005829">
    <property type="term" value="C:cytosol"/>
    <property type="evidence" value="ECO:0007669"/>
    <property type="project" value="TreeGrafter"/>
</dbReference>
<dbReference type="GO" id="GO:0005525">
    <property type="term" value="F:GTP binding"/>
    <property type="evidence" value="ECO:0007669"/>
    <property type="project" value="UniProtKB-UniRule"/>
</dbReference>
<dbReference type="GO" id="GO:0003924">
    <property type="term" value="F:GTPase activity"/>
    <property type="evidence" value="ECO:0007669"/>
    <property type="project" value="InterPro"/>
</dbReference>
<dbReference type="GO" id="GO:0016150">
    <property type="term" value="F:translation release factor activity, codon nonspecific"/>
    <property type="evidence" value="ECO:0007669"/>
    <property type="project" value="TreeGrafter"/>
</dbReference>
<dbReference type="GO" id="GO:0016149">
    <property type="term" value="F:translation release factor activity, codon specific"/>
    <property type="evidence" value="ECO:0007669"/>
    <property type="project" value="UniProtKB-UniRule"/>
</dbReference>
<dbReference type="GO" id="GO:0006449">
    <property type="term" value="P:regulation of translational termination"/>
    <property type="evidence" value="ECO:0007669"/>
    <property type="project" value="UniProtKB-UniRule"/>
</dbReference>
<dbReference type="CDD" id="cd04169">
    <property type="entry name" value="RF3"/>
    <property type="match status" value="1"/>
</dbReference>
<dbReference type="CDD" id="cd16259">
    <property type="entry name" value="RF3_III"/>
    <property type="match status" value="1"/>
</dbReference>
<dbReference type="FunFam" id="2.40.30.10:FF:000040">
    <property type="entry name" value="Peptide chain release factor 3"/>
    <property type="match status" value="1"/>
</dbReference>
<dbReference type="FunFam" id="3.30.70.3280:FF:000001">
    <property type="entry name" value="Peptide chain release factor 3"/>
    <property type="match status" value="1"/>
</dbReference>
<dbReference type="FunFam" id="3.40.50.300:FF:000542">
    <property type="entry name" value="Peptide chain release factor 3"/>
    <property type="match status" value="1"/>
</dbReference>
<dbReference type="Gene3D" id="3.40.50.300">
    <property type="entry name" value="P-loop containing nucleotide triphosphate hydrolases"/>
    <property type="match status" value="1"/>
</dbReference>
<dbReference type="Gene3D" id="3.30.70.3280">
    <property type="entry name" value="Peptide chain release factor 3, domain III"/>
    <property type="match status" value="1"/>
</dbReference>
<dbReference type="Gene3D" id="2.40.30.10">
    <property type="entry name" value="Translation factors"/>
    <property type="match status" value="1"/>
</dbReference>
<dbReference type="HAMAP" id="MF_00072">
    <property type="entry name" value="Rel_fac_3"/>
    <property type="match status" value="1"/>
</dbReference>
<dbReference type="InterPro" id="IPR053905">
    <property type="entry name" value="EF-G-like_DII"/>
</dbReference>
<dbReference type="InterPro" id="IPR035647">
    <property type="entry name" value="EFG_III/V"/>
</dbReference>
<dbReference type="InterPro" id="IPR031157">
    <property type="entry name" value="G_TR_CS"/>
</dbReference>
<dbReference type="InterPro" id="IPR027417">
    <property type="entry name" value="P-loop_NTPase"/>
</dbReference>
<dbReference type="InterPro" id="IPR004548">
    <property type="entry name" value="PrfC"/>
</dbReference>
<dbReference type="InterPro" id="IPR032090">
    <property type="entry name" value="RF3_C"/>
</dbReference>
<dbReference type="InterPro" id="IPR038467">
    <property type="entry name" value="RF3_dom_3_sf"/>
</dbReference>
<dbReference type="InterPro" id="IPR041732">
    <property type="entry name" value="RF3_GTP-bd"/>
</dbReference>
<dbReference type="InterPro" id="IPR005225">
    <property type="entry name" value="Small_GTP-bd"/>
</dbReference>
<dbReference type="InterPro" id="IPR000795">
    <property type="entry name" value="T_Tr_GTP-bd_dom"/>
</dbReference>
<dbReference type="InterPro" id="IPR009000">
    <property type="entry name" value="Transl_B-barrel_sf"/>
</dbReference>
<dbReference type="NCBIfam" id="TIGR00503">
    <property type="entry name" value="prfC"/>
    <property type="match status" value="1"/>
</dbReference>
<dbReference type="NCBIfam" id="NF001964">
    <property type="entry name" value="PRK00741.1"/>
    <property type="match status" value="1"/>
</dbReference>
<dbReference type="NCBIfam" id="TIGR00231">
    <property type="entry name" value="small_GTP"/>
    <property type="match status" value="1"/>
</dbReference>
<dbReference type="PANTHER" id="PTHR43556">
    <property type="entry name" value="PEPTIDE CHAIN RELEASE FACTOR RF3"/>
    <property type="match status" value="1"/>
</dbReference>
<dbReference type="PANTHER" id="PTHR43556:SF2">
    <property type="entry name" value="PEPTIDE CHAIN RELEASE FACTOR RF3"/>
    <property type="match status" value="1"/>
</dbReference>
<dbReference type="Pfam" id="PF22042">
    <property type="entry name" value="EF-G_D2"/>
    <property type="match status" value="1"/>
</dbReference>
<dbReference type="Pfam" id="PF00009">
    <property type="entry name" value="GTP_EFTU"/>
    <property type="match status" value="1"/>
</dbReference>
<dbReference type="Pfam" id="PF16658">
    <property type="entry name" value="RF3_C"/>
    <property type="match status" value="1"/>
</dbReference>
<dbReference type="PRINTS" id="PR00315">
    <property type="entry name" value="ELONGATNFCT"/>
</dbReference>
<dbReference type="PRINTS" id="PR01037">
    <property type="entry name" value="TCRTETOQM"/>
</dbReference>
<dbReference type="SUPFAM" id="SSF54980">
    <property type="entry name" value="EF-G C-terminal domain-like"/>
    <property type="match status" value="1"/>
</dbReference>
<dbReference type="SUPFAM" id="SSF52540">
    <property type="entry name" value="P-loop containing nucleoside triphosphate hydrolases"/>
    <property type="match status" value="1"/>
</dbReference>
<dbReference type="SUPFAM" id="SSF50447">
    <property type="entry name" value="Translation proteins"/>
    <property type="match status" value="1"/>
</dbReference>
<dbReference type="PROSITE" id="PS00301">
    <property type="entry name" value="G_TR_1"/>
    <property type="match status" value="1"/>
</dbReference>
<dbReference type="PROSITE" id="PS51722">
    <property type="entry name" value="G_TR_2"/>
    <property type="match status" value="1"/>
</dbReference>
<keyword id="KW-0963">Cytoplasm</keyword>
<keyword id="KW-0342">GTP-binding</keyword>
<keyword id="KW-0547">Nucleotide-binding</keyword>
<keyword id="KW-0648">Protein biosynthesis</keyword>
<keyword id="KW-1185">Reference proteome</keyword>
<sequence length="514" mass="58301">MTLQDEIKKRRTFAIISHPDAGKTTITEQLLYFGGEIREAGTVKGKKSGTFAKSDWMDIEKQRGISVTSSVMQFDYAGKRVNILDTPGHEDFSEDTYRTLMAVDAAVMVVDSAKGIEAQTKKLFEVVKHRNIPVFTFINKLDRDGREPLDLLEELEEVLGIASYPMNWPIGMGKSFEGLYDLHNKRLELYKGDERFASIEDGDQLFANNPFYEQVKEDIELLQEAGNDFSEQAILDGDLTPVFFGSALTNFGVQTFLDTFLEFAPEPHGHKTTEGNVIDPLAKDFSGFVFKIQANMDPRHRDRIAFVRIVSGEFERGMGVNLTRTGKGAKLSNVTQFMAESRENVTNAVAGDIIGVYDTGTYQVGDTLTVGKNKFEFEPLPTFTPELFMKVSAKNVMKQKSFHKGIEQLVQEGAIQLYKNYQTGEYMLGAVGQLQFEVFKHRMEGEYNAEVVMTPMGKKTVRWINSDDLDERMSSSRNILAKDRFDQPVFLFENDFALRWFADKYPDVKLEEKM</sequence>
<proteinExistence type="inferred from homology"/>
<protein>
    <recommendedName>
        <fullName evidence="1">Peptide chain release factor 3</fullName>
        <shortName evidence="1">RF-3</shortName>
    </recommendedName>
</protein>